<keyword id="KW-1185">Reference proteome</keyword>
<keyword id="KW-0687">Ribonucleoprotein</keyword>
<keyword id="KW-0689">Ribosomal protein</keyword>
<keyword id="KW-0694">RNA-binding</keyword>
<keyword id="KW-0699">rRNA-binding</keyword>
<organism>
    <name type="scientific">Methanococcus maripaludis (strain DSM 14266 / JCM 13030 / NBRC 101832 / S2 / LL)</name>
    <dbReference type="NCBI Taxonomy" id="267377"/>
    <lineage>
        <taxon>Archaea</taxon>
        <taxon>Methanobacteriati</taxon>
        <taxon>Methanobacteriota</taxon>
        <taxon>Methanomada group</taxon>
        <taxon>Methanococci</taxon>
        <taxon>Methanococcales</taxon>
        <taxon>Methanococcaceae</taxon>
        <taxon>Methanococcus</taxon>
    </lineage>
</organism>
<protein>
    <recommendedName>
        <fullName evidence="1">Large ribosomal subunit protein eL20</fullName>
    </recommendedName>
    <alternativeName>
        <fullName evidence="2">50S ribosomal protein L18Ae</fullName>
    </alternativeName>
    <alternativeName>
        <fullName evidence="1">50S ribosomal protein L20e</fullName>
    </alternativeName>
    <alternativeName>
        <fullName evidence="1">50S ribosomal protein LX</fullName>
    </alternativeName>
</protein>
<feature type="chain" id="PRO_0000153701" description="Large ribosomal subunit protein eL20">
    <location>
        <begin position="1"/>
        <end position="76"/>
    </location>
</feature>
<sequence length="76" mass="8635">MAKIVRIKGEIVGKDEPMVFTKEYNVLKENDALETMYSEIGSKHAVKRANIKVVEISEISVEEIQSPILKKTLEMN</sequence>
<gene>
    <name evidence="1" type="primary">rpl18a</name>
    <name evidence="1" type="synonym">rpl20e</name>
    <name evidence="1" type="synonym">rplX</name>
    <name type="ordered locus">MMP0060</name>
</gene>
<proteinExistence type="inferred from homology"/>
<name>RL18A_METMP</name>
<evidence type="ECO:0000255" key="1">
    <source>
        <dbReference type="HAMAP-Rule" id="MF_00273"/>
    </source>
</evidence>
<evidence type="ECO:0000305" key="2"/>
<dbReference type="EMBL" id="BX950229">
    <property type="protein sequence ID" value="CAF29616.1"/>
    <property type="molecule type" value="Genomic_DNA"/>
</dbReference>
<dbReference type="RefSeq" id="WP_011170004.1">
    <property type="nucleotide sequence ID" value="NC_005791.1"/>
</dbReference>
<dbReference type="SMR" id="Q6M157"/>
<dbReference type="STRING" id="267377.MMP0060"/>
<dbReference type="EnsemblBacteria" id="CAF29616">
    <property type="protein sequence ID" value="CAF29616"/>
    <property type="gene ID" value="MMP0060"/>
</dbReference>
<dbReference type="GeneID" id="2761240"/>
<dbReference type="GeneID" id="36102122"/>
<dbReference type="KEGG" id="mmp:MMP0060"/>
<dbReference type="PATRIC" id="fig|267377.15.peg.61"/>
<dbReference type="eggNOG" id="arCOG04175">
    <property type="taxonomic scope" value="Archaea"/>
</dbReference>
<dbReference type="HOGENOM" id="CLU_177460_0_1_2"/>
<dbReference type="OrthoDB" id="191241at2157"/>
<dbReference type="Proteomes" id="UP000000590">
    <property type="component" value="Chromosome"/>
</dbReference>
<dbReference type="GO" id="GO:1990904">
    <property type="term" value="C:ribonucleoprotein complex"/>
    <property type="evidence" value="ECO:0007669"/>
    <property type="project" value="UniProtKB-KW"/>
</dbReference>
<dbReference type="GO" id="GO:0005840">
    <property type="term" value="C:ribosome"/>
    <property type="evidence" value="ECO:0007669"/>
    <property type="project" value="UniProtKB-KW"/>
</dbReference>
<dbReference type="GO" id="GO:0070180">
    <property type="term" value="F:large ribosomal subunit rRNA binding"/>
    <property type="evidence" value="ECO:0007669"/>
    <property type="project" value="UniProtKB-UniRule"/>
</dbReference>
<dbReference type="GO" id="GO:0003735">
    <property type="term" value="F:structural constituent of ribosome"/>
    <property type="evidence" value="ECO:0007669"/>
    <property type="project" value="InterPro"/>
</dbReference>
<dbReference type="GO" id="GO:0006412">
    <property type="term" value="P:translation"/>
    <property type="evidence" value="ECO:0007669"/>
    <property type="project" value="UniProtKB-UniRule"/>
</dbReference>
<dbReference type="Gene3D" id="3.10.20.10">
    <property type="match status" value="1"/>
</dbReference>
<dbReference type="HAMAP" id="MF_00273">
    <property type="entry name" value="Ribosomal_eL20"/>
    <property type="match status" value="1"/>
</dbReference>
<dbReference type="InterPro" id="IPR028877">
    <property type="entry name" value="Ribosomal_eL20"/>
</dbReference>
<dbReference type="InterPro" id="IPR023573">
    <property type="entry name" value="Ribosomal_eL20_dom"/>
</dbReference>
<dbReference type="NCBIfam" id="NF001981">
    <property type="entry name" value="PRK00773.1-1"/>
    <property type="match status" value="1"/>
</dbReference>
<dbReference type="Pfam" id="PF01775">
    <property type="entry name" value="Ribosomal_L18A"/>
    <property type="match status" value="1"/>
</dbReference>
<dbReference type="SUPFAM" id="SSF160374">
    <property type="entry name" value="RplX-like"/>
    <property type="match status" value="1"/>
</dbReference>
<comment type="subunit">
    <text evidence="1">Part of the 50S ribosomal subunit. Binds 23S rRNA.</text>
</comment>
<comment type="similarity">
    <text evidence="1">Belongs to the eukaryotic ribosomal protein eL20 family.</text>
</comment>
<reference key="1">
    <citation type="journal article" date="2004" name="J. Bacteriol.">
        <title>Complete genome sequence of the genetically tractable hydrogenotrophic methanogen Methanococcus maripaludis.</title>
        <authorList>
            <person name="Hendrickson E.L."/>
            <person name="Kaul R."/>
            <person name="Zhou Y."/>
            <person name="Bovee D."/>
            <person name="Chapman P."/>
            <person name="Chung J."/>
            <person name="Conway de Macario E."/>
            <person name="Dodsworth J.A."/>
            <person name="Gillett W."/>
            <person name="Graham D.E."/>
            <person name="Hackett M."/>
            <person name="Haydock A.K."/>
            <person name="Kang A."/>
            <person name="Land M.L."/>
            <person name="Levy R."/>
            <person name="Lie T.J."/>
            <person name="Major T.A."/>
            <person name="Moore B.C."/>
            <person name="Porat I."/>
            <person name="Palmeiri A."/>
            <person name="Rouse G."/>
            <person name="Saenphimmachak C."/>
            <person name="Soell D."/>
            <person name="Van Dien S."/>
            <person name="Wang T."/>
            <person name="Whitman W.B."/>
            <person name="Xia Q."/>
            <person name="Zhang Y."/>
            <person name="Larimer F.W."/>
            <person name="Olson M.V."/>
            <person name="Leigh J.A."/>
        </authorList>
    </citation>
    <scope>NUCLEOTIDE SEQUENCE [LARGE SCALE GENOMIC DNA]</scope>
    <source>
        <strain>DSM 14266 / JCM 13030 / NBRC 101832 / S2 / LL</strain>
    </source>
</reference>
<accession>Q6M157</accession>